<accession>P57747</accession>
<feature type="chain" id="PRO_0000144239" description="V-type proton ATPase subunit D">
    <location>
        <begin position="1"/>
        <end position="250"/>
    </location>
</feature>
<gene>
    <name type="primary">VATPD</name>
</gene>
<keyword id="KW-0375">Hydrogen ion transport</keyword>
<keyword id="KW-0406">Ion transport</keyword>
<keyword id="KW-0813">Transport</keyword>
<sequence length="250" mass="28374">MSGKDRINVFPSRMALTLMKARLKGAQKGHSLLKRKADALTLRFRQILGKIIETKTLMGEVMKEATFSLAEAKFVAGDFSEMVLQNVDKAKIRLHTKKDNVAGVTLPVFETYSDGSDTYELTGLSRGGQLVSKCKEVFGKAVRLLVELASLQTAFVTLDEVIKVTNRRVNAIEHVIIPKIQRTLSYISIELDEREREEFYRLKKIQEKKKKQKAIKEKETEIRIARQKNKKSAAPVKTIFETGNDDDLLF</sequence>
<proteinExistence type="evidence at transcript level"/>
<dbReference type="EMBL" id="AJ297976">
    <property type="protein sequence ID" value="CAC17412.1"/>
    <property type="molecule type" value="mRNA"/>
</dbReference>
<dbReference type="SMR" id="P57747"/>
<dbReference type="GO" id="GO:0046961">
    <property type="term" value="F:proton-transporting ATPase activity, rotational mechanism"/>
    <property type="evidence" value="ECO:0007669"/>
    <property type="project" value="InterPro"/>
</dbReference>
<dbReference type="FunFam" id="1.10.287.3240:FF:000001">
    <property type="entry name" value="V-type proton ATPase subunit D"/>
    <property type="match status" value="1"/>
</dbReference>
<dbReference type="Gene3D" id="1.10.287.3240">
    <property type="match status" value="1"/>
</dbReference>
<dbReference type="HAMAP" id="MF_00271">
    <property type="entry name" value="ATP_synth_D_arch"/>
    <property type="match status" value="1"/>
</dbReference>
<dbReference type="InterPro" id="IPR002699">
    <property type="entry name" value="V_ATPase_D"/>
</dbReference>
<dbReference type="NCBIfam" id="TIGR00309">
    <property type="entry name" value="V_ATPase_subD"/>
    <property type="match status" value="1"/>
</dbReference>
<dbReference type="PANTHER" id="PTHR11671">
    <property type="entry name" value="V-TYPE ATP SYNTHASE SUBUNIT D"/>
    <property type="match status" value="1"/>
</dbReference>
<dbReference type="Pfam" id="PF01813">
    <property type="entry name" value="ATP-synt_D"/>
    <property type="match status" value="1"/>
</dbReference>
<evidence type="ECO:0000250" key="1">
    <source>
        <dbReference type="UniProtKB" id="P39942"/>
    </source>
</evidence>
<evidence type="ECO:0000250" key="2">
    <source>
        <dbReference type="UniProtKB" id="Q9Y5K8"/>
    </source>
</evidence>
<evidence type="ECO:0000305" key="3"/>
<protein>
    <recommendedName>
        <fullName>V-type proton ATPase subunit D</fullName>
        <shortName>V-ATPase subunit D</shortName>
    </recommendedName>
    <alternativeName>
        <fullName>Vacuolar proton pump subunit D</fullName>
    </alternativeName>
</protein>
<name>VATD_SUBDO</name>
<comment type="function">
    <text evidence="1 2">Subunit of the V1 complex of vacuolar(H+)-ATPase (V-ATPase), a multisubunit enzyme composed of a peripheral complex (V1) that hydrolyzes ATP and a membrane integral complex (V0) that translocates protons (By similarity). V-ATPase is responsible for acidifying and maintaining the pH of intracellular compartments and in some cell types, is targeted to the plasma membrane, where it is responsible for acidifying the extracellular environment (By similarity).</text>
</comment>
<comment type="subunit">
    <text evidence="2">V-ATPase is a heteromultimeric enzyme made up of two complexes: the ATP-hydrolytic V1 complex and the proton translocation V0 complex (By similarity). The V1 complex consists of three catalytic AB heterodimers that form a heterohexamer, three peripheral stalks each consisting of EG heterodimers, one central rotor including subunits D and F, and the regulatory subunits C and H (By similarity). The proton translocation complex V0 consists of the proton transport subunit a, a ring of proteolipid subunits c9c'', rotary subunit d, subunits e and f, and two accessory subunits ATP6AP1/Ac45 and ATP6AP2/PRR (By similarity).</text>
</comment>
<comment type="similarity">
    <text evidence="3">Belongs to the V-ATPase D subunit family.</text>
</comment>
<organism>
    <name type="scientific">Suberites domuncula</name>
    <name type="common">Sponge</name>
    <dbReference type="NCBI Taxonomy" id="55567"/>
    <lineage>
        <taxon>Eukaryota</taxon>
        <taxon>Metazoa</taxon>
        <taxon>Porifera</taxon>
        <taxon>Demospongiae</taxon>
        <taxon>Heteroscleromorpha</taxon>
        <taxon>Suberitida</taxon>
        <taxon>Suberitidae</taxon>
        <taxon>Suberites</taxon>
    </lineage>
</organism>
<reference key="1">
    <citation type="submission" date="2000-11" db="EMBL/GenBank/DDBJ databases">
        <authorList>
            <person name="Mueller W.E.G."/>
            <person name="Wiens M."/>
        </authorList>
    </citation>
    <scope>NUCLEOTIDE SEQUENCE [MRNA]</scope>
</reference>